<organism>
    <name type="scientific">Caldicellulosiruptor bescii (strain ATCC BAA-1888 / DSM 6725 / KCTC 15123 / Z-1320)</name>
    <name type="common">Anaerocellum thermophilum</name>
    <dbReference type="NCBI Taxonomy" id="521460"/>
    <lineage>
        <taxon>Bacteria</taxon>
        <taxon>Bacillati</taxon>
        <taxon>Bacillota</taxon>
        <taxon>Bacillota incertae sedis</taxon>
        <taxon>Caldicellulosiruptorales</taxon>
        <taxon>Caldicellulosiruptoraceae</taxon>
        <taxon>Caldicellulosiruptor</taxon>
    </lineage>
</organism>
<accession>B9MPL7</accession>
<dbReference type="EMBL" id="CP001393">
    <property type="protein sequence ID" value="ACM59778.1"/>
    <property type="molecule type" value="Genomic_DNA"/>
</dbReference>
<dbReference type="RefSeq" id="WP_015907226.1">
    <property type="nucleotide sequence ID" value="NC_012034.1"/>
</dbReference>
<dbReference type="SMR" id="B9MPL7"/>
<dbReference type="STRING" id="521460.Athe_0654"/>
<dbReference type="GeneID" id="31772008"/>
<dbReference type="KEGG" id="ate:Athe_0654"/>
<dbReference type="eggNOG" id="COG2344">
    <property type="taxonomic scope" value="Bacteria"/>
</dbReference>
<dbReference type="HOGENOM" id="CLU_061534_1_0_9"/>
<dbReference type="Proteomes" id="UP000007723">
    <property type="component" value="Chromosome"/>
</dbReference>
<dbReference type="GO" id="GO:0005737">
    <property type="term" value="C:cytoplasm"/>
    <property type="evidence" value="ECO:0007669"/>
    <property type="project" value="UniProtKB-SubCell"/>
</dbReference>
<dbReference type="GO" id="GO:0003677">
    <property type="term" value="F:DNA binding"/>
    <property type="evidence" value="ECO:0007669"/>
    <property type="project" value="UniProtKB-UniRule"/>
</dbReference>
<dbReference type="GO" id="GO:0003700">
    <property type="term" value="F:DNA-binding transcription factor activity"/>
    <property type="evidence" value="ECO:0007669"/>
    <property type="project" value="UniProtKB-UniRule"/>
</dbReference>
<dbReference type="GO" id="GO:0045892">
    <property type="term" value="P:negative regulation of DNA-templated transcription"/>
    <property type="evidence" value="ECO:0007669"/>
    <property type="project" value="InterPro"/>
</dbReference>
<dbReference type="GO" id="GO:0051775">
    <property type="term" value="P:response to redox state"/>
    <property type="evidence" value="ECO:0007669"/>
    <property type="project" value="InterPro"/>
</dbReference>
<dbReference type="Gene3D" id="3.40.50.720">
    <property type="entry name" value="NAD(P)-binding Rossmann-like Domain"/>
    <property type="match status" value="1"/>
</dbReference>
<dbReference type="Gene3D" id="1.10.10.10">
    <property type="entry name" value="Winged helix-like DNA-binding domain superfamily/Winged helix DNA-binding domain"/>
    <property type="match status" value="1"/>
</dbReference>
<dbReference type="HAMAP" id="MF_01131">
    <property type="entry name" value="Rex"/>
    <property type="match status" value="1"/>
</dbReference>
<dbReference type="InterPro" id="IPR003781">
    <property type="entry name" value="CoA-bd"/>
</dbReference>
<dbReference type="InterPro" id="IPR036291">
    <property type="entry name" value="NAD(P)-bd_dom_sf"/>
</dbReference>
<dbReference type="InterPro" id="IPR009718">
    <property type="entry name" value="Rex_DNA-bd_C_dom"/>
</dbReference>
<dbReference type="InterPro" id="IPR022876">
    <property type="entry name" value="Tscrpt_rep_Rex"/>
</dbReference>
<dbReference type="InterPro" id="IPR036388">
    <property type="entry name" value="WH-like_DNA-bd_sf"/>
</dbReference>
<dbReference type="InterPro" id="IPR036390">
    <property type="entry name" value="WH_DNA-bd_sf"/>
</dbReference>
<dbReference type="NCBIfam" id="NF003989">
    <property type="entry name" value="PRK05472.1-3"/>
    <property type="match status" value="1"/>
</dbReference>
<dbReference type="NCBIfam" id="NF003990">
    <property type="entry name" value="PRK05472.1-4"/>
    <property type="match status" value="1"/>
</dbReference>
<dbReference type="NCBIfam" id="NF003993">
    <property type="entry name" value="PRK05472.2-2"/>
    <property type="match status" value="1"/>
</dbReference>
<dbReference type="NCBIfam" id="NF003994">
    <property type="entry name" value="PRK05472.2-3"/>
    <property type="match status" value="1"/>
</dbReference>
<dbReference type="NCBIfam" id="NF003995">
    <property type="entry name" value="PRK05472.2-4"/>
    <property type="match status" value="1"/>
</dbReference>
<dbReference type="NCBIfam" id="NF003996">
    <property type="entry name" value="PRK05472.2-5"/>
    <property type="match status" value="1"/>
</dbReference>
<dbReference type="PANTHER" id="PTHR35786">
    <property type="entry name" value="REDOX-SENSING TRANSCRIPTIONAL REPRESSOR REX"/>
    <property type="match status" value="1"/>
</dbReference>
<dbReference type="PANTHER" id="PTHR35786:SF1">
    <property type="entry name" value="REDOX-SENSING TRANSCRIPTIONAL REPRESSOR REX 1"/>
    <property type="match status" value="1"/>
</dbReference>
<dbReference type="Pfam" id="PF02629">
    <property type="entry name" value="CoA_binding"/>
    <property type="match status" value="1"/>
</dbReference>
<dbReference type="Pfam" id="PF06971">
    <property type="entry name" value="Put_DNA-bind_N"/>
    <property type="match status" value="1"/>
</dbReference>
<dbReference type="SMART" id="SM00881">
    <property type="entry name" value="CoA_binding"/>
    <property type="match status" value="1"/>
</dbReference>
<dbReference type="SUPFAM" id="SSF51735">
    <property type="entry name" value="NAD(P)-binding Rossmann-fold domains"/>
    <property type="match status" value="1"/>
</dbReference>
<dbReference type="SUPFAM" id="SSF46785">
    <property type="entry name" value="Winged helix' DNA-binding domain"/>
    <property type="match status" value="1"/>
</dbReference>
<reference key="1">
    <citation type="submission" date="2009-01" db="EMBL/GenBank/DDBJ databases">
        <title>Complete sequence of chromosome of Caldicellulosiruptor becscii DSM 6725.</title>
        <authorList>
            <person name="Lucas S."/>
            <person name="Copeland A."/>
            <person name="Lapidus A."/>
            <person name="Glavina del Rio T."/>
            <person name="Tice H."/>
            <person name="Bruce D."/>
            <person name="Goodwin L."/>
            <person name="Pitluck S."/>
            <person name="Sims D."/>
            <person name="Meincke L."/>
            <person name="Brettin T."/>
            <person name="Detter J.C."/>
            <person name="Han C."/>
            <person name="Larimer F."/>
            <person name="Land M."/>
            <person name="Hauser L."/>
            <person name="Kyrpides N."/>
            <person name="Ovchinnikova G."/>
            <person name="Kataeva I."/>
            <person name="Adams M.W.W."/>
        </authorList>
    </citation>
    <scope>NUCLEOTIDE SEQUENCE [LARGE SCALE GENOMIC DNA]</scope>
    <source>
        <strain>ATCC BAA-1888 / DSM 6725 / KCTC 15123 / Z-1320</strain>
    </source>
</reference>
<protein>
    <recommendedName>
        <fullName evidence="1">Redox-sensing transcriptional repressor Rex</fullName>
    </recommendedName>
</protein>
<evidence type="ECO:0000255" key="1">
    <source>
        <dbReference type="HAMAP-Rule" id="MF_01131"/>
    </source>
</evidence>
<name>REX_CALBD</name>
<sequence>MFKKKNISLAVIRRLPRYLRYVEDLLNHDVLRISSSELSQRMGYTASQVRQDFNNFGGFGQQGYGYSTQVLYENLVKILGLDRNFKMVIVGVGNLGQALANYANFYKKGFRLIGLFDIDPQKVGKTIRDIKIEHIDKLKDFIKKNDVDIGVLCVPADVAQEVADIMVEGGIKGIWNFTAKEIEVKGDVVVENVHLIDSLMVLSYKLNEKLLEKERIK</sequence>
<proteinExistence type="inferred from homology"/>
<comment type="function">
    <text evidence="1">Modulates transcription in response to changes in cellular NADH/NAD(+) redox state.</text>
</comment>
<comment type="subunit">
    <text evidence="1">Homodimer.</text>
</comment>
<comment type="subcellular location">
    <subcellularLocation>
        <location evidence="1">Cytoplasm</location>
    </subcellularLocation>
</comment>
<comment type="similarity">
    <text evidence="1">Belongs to the transcriptional regulatory Rex family.</text>
</comment>
<feature type="chain" id="PRO_1000164074" description="Redox-sensing transcriptional repressor Rex">
    <location>
        <begin position="1"/>
        <end position="217"/>
    </location>
</feature>
<feature type="DNA-binding region" description="H-T-H motif" evidence="1">
    <location>
        <begin position="17"/>
        <end position="56"/>
    </location>
</feature>
<feature type="binding site" evidence="1">
    <location>
        <begin position="91"/>
        <end position="96"/>
    </location>
    <ligand>
        <name>NAD(+)</name>
        <dbReference type="ChEBI" id="CHEBI:57540"/>
    </ligand>
</feature>
<keyword id="KW-0963">Cytoplasm</keyword>
<keyword id="KW-0238">DNA-binding</keyword>
<keyword id="KW-0520">NAD</keyword>
<keyword id="KW-0678">Repressor</keyword>
<keyword id="KW-0804">Transcription</keyword>
<keyword id="KW-0805">Transcription regulation</keyword>
<gene>
    <name evidence="1" type="primary">rex</name>
    <name type="ordered locus">Athe_0654</name>
</gene>